<proteinExistence type="inferred from homology"/>
<organism>
    <name type="scientific">Acorus calamus</name>
    <name type="common">Sweet flag</name>
    <dbReference type="NCBI Taxonomy" id="4465"/>
    <lineage>
        <taxon>Eukaryota</taxon>
        <taxon>Viridiplantae</taxon>
        <taxon>Streptophyta</taxon>
        <taxon>Embryophyta</taxon>
        <taxon>Tracheophyta</taxon>
        <taxon>Spermatophyta</taxon>
        <taxon>Magnoliopsida</taxon>
        <taxon>Liliopsida</taxon>
        <taxon>Acoraceae</taxon>
        <taxon>Acorus</taxon>
    </lineage>
</organism>
<protein>
    <recommendedName>
        <fullName evidence="1">Photosystem II reaction center protein M</fullName>
        <shortName evidence="1">PSII-M</shortName>
    </recommendedName>
</protein>
<comment type="function">
    <text evidence="1">One of the components of the core complex of photosystem II (PSII). PSII is a light-driven water:plastoquinone oxidoreductase that uses light energy to abstract electrons from H(2)O, generating O(2) and a proton gradient subsequently used for ATP formation. It consists of a core antenna complex that captures photons, and an electron transfer chain that converts photonic excitation into a charge separation. This subunit is found at the monomer-monomer interface.</text>
</comment>
<comment type="subunit">
    <text evidence="1">PSII is composed of 1 copy each of membrane proteins PsbA, PsbB, PsbC, PsbD, PsbE, PsbF, PsbH, PsbI, PsbJ, PsbK, PsbL, PsbM, PsbT, PsbX, PsbY, PsbZ, Psb30/Ycf12, at least 3 peripheral proteins of the oxygen-evolving complex and a large number of cofactors. It forms dimeric complexes.</text>
</comment>
<comment type="subcellular location">
    <subcellularLocation>
        <location evidence="1">Plastid</location>
        <location evidence="1">Chloroplast thylakoid membrane</location>
        <topology evidence="1">Single-pass membrane protein</topology>
    </subcellularLocation>
</comment>
<comment type="similarity">
    <text evidence="1">Belongs to the PsbM family.</text>
</comment>
<sequence>MEVNILAFIATALFILVPTAFLLIIYVKTVSQND</sequence>
<accession>Q3V540</accession>
<feature type="chain" id="PRO_0000325715" description="Photosystem II reaction center protein M">
    <location>
        <begin position="1"/>
        <end position="34"/>
    </location>
</feature>
<feature type="transmembrane region" description="Helical" evidence="1">
    <location>
        <begin position="5"/>
        <end position="25"/>
    </location>
</feature>
<evidence type="ECO:0000255" key="1">
    <source>
        <dbReference type="HAMAP-Rule" id="MF_00438"/>
    </source>
</evidence>
<gene>
    <name evidence="1" type="primary">psbM</name>
</gene>
<keyword id="KW-0150">Chloroplast</keyword>
<keyword id="KW-0472">Membrane</keyword>
<keyword id="KW-0602">Photosynthesis</keyword>
<keyword id="KW-0604">Photosystem II</keyword>
<keyword id="KW-0934">Plastid</keyword>
<keyword id="KW-0674">Reaction center</keyword>
<keyword id="KW-0793">Thylakoid</keyword>
<keyword id="KW-0812">Transmembrane</keyword>
<keyword id="KW-1133">Transmembrane helix</keyword>
<reference key="1">
    <citation type="journal article" date="2005" name="Mol. Biol. Evol.">
        <title>Analysis of Acorus calamus chloroplast genome and its phylogenetic implications.</title>
        <authorList>
            <person name="Goremykin V.V."/>
            <person name="Holland B."/>
            <person name="Hirsch-Ernst K.I."/>
            <person name="Hellwig F.H."/>
        </authorList>
    </citation>
    <scope>NUCLEOTIDE SEQUENCE [LARGE SCALE GENOMIC DNA]</scope>
</reference>
<name>PSBM_ACOCL</name>
<dbReference type="EMBL" id="AJ879453">
    <property type="protein sequence ID" value="CAI53788.1"/>
    <property type="molecule type" value="Genomic_DNA"/>
</dbReference>
<dbReference type="RefSeq" id="YP_319759.1">
    <property type="nucleotide sequence ID" value="NC_007407.1"/>
</dbReference>
<dbReference type="SMR" id="Q3V540"/>
<dbReference type="GeneID" id="3677473"/>
<dbReference type="GO" id="GO:0009535">
    <property type="term" value="C:chloroplast thylakoid membrane"/>
    <property type="evidence" value="ECO:0007669"/>
    <property type="project" value="UniProtKB-SubCell"/>
</dbReference>
<dbReference type="GO" id="GO:0009523">
    <property type="term" value="C:photosystem II"/>
    <property type="evidence" value="ECO:0007669"/>
    <property type="project" value="UniProtKB-KW"/>
</dbReference>
<dbReference type="GO" id="GO:0019684">
    <property type="term" value="P:photosynthesis, light reaction"/>
    <property type="evidence" value="ECO:0007669"/>
    <property type="project" value="InterPro"/>
</dbReference>
<dbReference type="HAMAP" id="MF_00438">
    <property type="entry name" value="PSII_PsbM"/>
    <property type="match status" value="1"/>
</dbReference>
<dbReference type="InterPro" id="IPR007826">
    <property type="entry name" value="PSII_PsbM"/>
</dbReference>
<dbReference type="InterPro" id="IPR037269">
    <property type="entry name" value="PSII_PsbM_sf"/>
</dbReference>
<dbReference type="NCBIfam" id="TIGR03038">
    <property type="entry name" value="PS_II_psbM"/>
    <property type="match status" value="1"/>
</dbReference>
<dbReference type="PANTHER" id="PTHR35774">
    <property type="entry name" value="PHOTOSYSTEM II REACTION CENTER PROTEIN M"/>
    <property type="match status" value="1"/>
</dbReference>
<dbReference type="PANTHER" id="PTHR35774:SF1">
    <property type="entry name" value="PHOTOSYSTEM II REACTION CENTER PROTEIN M"/>
    <property type="match status" value="1"/>
</dbReference>
<dbReference type="Pfam" id="PF05151">
    <property type="entry name" value="PsbM"/>
    <property type="match status" value="1"/>
</dbReference>
<dbReference type="SUPFAM" id="SSF161033">
    <property type="entry name" value="Photosystem II reaction center protein M, PsbM"/>
    <property type="match status" value="1"/>
</dbReference>
<geneLocation type="chloroplast"/>